<comment type="function">
    <text evidence="1">NAD-binding protein involved in the addition of a carboxymethylaminomethyl (cmnm) group at the wobble position (U34) of certain tRNAs, forming tRNA-cmnm(5)s(2)U34.</text>
</comment>
<comment type="cofactor">
    <cofactor evidence="1">
        <name>FAD</name>
        <dbReference type="ChEBI" id="CHEBI:57692"/>
    </cofactor>
</comment>
<comment type="subunit">
    <text evidence="1">Homodimer. Heterotetramer of two MnmE and two MnmG subunits.</text>
</comment>
<comment type="subcellular location">
    <subcellularLocation>
        <location evidence="1">Cytoplasm</location>
    </subcellularLocation>
</comment>
<comment type="similarity">
    <text evidence="1">Belongs to the MnmG family.</text>
</comment>
<evidence type="ECO:0000255" key="1">
    <source>
        <dbReference type="HAMAP-Rule" id="MF_00129"/>
    </source>
</evidence>
<name>MNMG_PSEPG</name>
<organism>
    <name type="scientific">Pseudomonas putida (strain GB-1)</name>
    <dbReference type="NCBI Taxonomy" id="76869"/>
    <lineage>
        <taxon>Bacteria</taxon>
        <taxon>Pseudomonadati</taxon>
        <taxon>Pseudomonadota</taxon>
        <taxon>Gammaproteobacteria</taxon>
        <taxon>Pseudomonadales</taxon>
        <taxon>Pseudomonadaceae</taxon>
        <taxon>Pseudomonas</taxon>
    </lineage>
</organism>
<sequence length="630" mass="69413">MDFPSRFEVIVIGGGHAGTEAALASARMGVKTLLLTHNVETLGHMSCNPAIGGIGKSHLVKEIDALGGAMALATDKSGIQFRVLNNRKGPAVRATRAQADRAIYKAVVREILENQPNLWIFQQSCDDLIVEQDQVKGVVTQMGLRFFAESVVLTTGTFLGGLIHIGLQNHSGGRAGDPPSIALAHRMRELPLRVGRLKTGTPPRIDGRSVDFSVMTEQPGDTPIPVMSFMGNAEMHPRQVSCWITHTNARTHEIIASNLDRSPMYSGVIEGVGPRYCPSIEDKIHRFADKDSHQVFIEPEGLTTHELYPNGISTSLPFDVQLELVRSIRGMENAHIVRPGYAIEYDYFDPRDLKYSLETKVIGGLFFAGQINGTTGYEEAGAQGLLAGTNAALRAQGRDSWCPRRDEAYIGVLVDDLITLGTQEPYRMFTSRAEYRLILREDNADLRLTEKGRELGLIDDQRWAAFCAKRDGIEREEQRLKSTWVRPNTEQGQAIVDKFGTPLSHEYSLLNLLARPEIDYAGLIEATGGEAIDPQVAEQVEIRTKYAGYIDRQQDEIARLRASEDTRLPVDIDYSTISGLSKEIQGKLGQTRPETLGQASRIPGVTPAAISLLLIHLKKRGAGRELEQSA</sequence>
<protein>
    <recommendedName>
        <fullName evidence="1">tRNA uridine 5-carboxymethylaminomethyl modification enzyme MnmG</fullName>
    </recommendedName>
    <alternativeName>
        <fullName evidence="1">Glucose-inhibited division protein A</fullName>
    </alternativeName>
</protein>
<dbReference type="EMBL" id="CP000926">
    <property type="protein sequence ID" value="ABZ01324.1"/>
    <property type="molecule type" value="Genomic_DNA"/>
</dbReference>
<dbReference type="RefSeq" id="WP_012274915.1">
    <property type="nucleotide sequence ID" value="NC_010322.1"/>
</dbReference>
<dbReference type="SMR" id="B0KRB9"/>
<dbReference type="KEGG" id="ppg:PputGB1_5442"/>
<dbReference type="eggNOG" id="COG0445">
    <property type="taxonomic scope" value="Bacteria"/>
</dbReference>
<dbReference type="HOGENOM" id="CLU_007831_2_2_6"/>
<dbReference type="Proteomes" id="UP000002157">
    <property type="component" value="Chromosome"/>
</dbReference>
<dbReference type="GO" id="GO:0005829">
    <property type="term" value="C:cytosol"/>
    <property type="evidence" value="ECO:0007669"/>
    <property type="project" value="TreeGrafter"/>
</dbReference>
<dbReference type="GO" id="GO:0050660">
    <property type="term" value="F:flavin adenine dinucleotide binding"/>
    <property type="evidence" value="ECO:0007669"/>
    <property type="project" value="UniProtKB-UniRule"/>
</dbReference>
<dbReference type="GO" id="GO:0030488">
    <property type="term" value="P:tRNA methylation"/>
    <property type="evidence" value="ECO:0007669"/>
    <property type="project" value="TreeGrafter"/>
</dbReference>
<dbReference type="GO" id="GO:0002098">
    <property type="term" value="P:tRNA wobble uridine modification"/>
    <property type="evidence" value="ECO:0007669"/>
    <property type="project" value="InterPro"/>
</dbReference>
<dbReference type="FunFam" id="1.10.10.1800:FF:000001">
    <property type="entry name" value="tRNA uridine 5-carboxymethylaminomethyl modification enzyme MnmG"/>
    <property type="match status" value="1"/>
</dbReference>
<dbReference type="FunFam" id="1.10.150.570:FF:000001">
    <property type="entry name" value="tRNA uridine 5-carboxymethylaminomethyl modification enzyme MnmG"/>
    <property type="match status" value="1"/>
</dbReference>
<dbReference type="FunFam" id="3.50.50.60:FF:000002">
    <property type="entry name" value="tRNA uridine 5-carboxymethylaminomethyl modification enzyme MnmG"/>
    <property type="match status" value="1"/>
</dbReference>
<dbReference type="FunFam" id="3.50.50.60:FF:000010">
    <property type="entry name" value="tRNA uridine 5-carboxymethylaminomethyl modification enzyme MnmG"/>
    <property type="match status" value="1"/>
</dbReference>
<dbReference type="Gene3D" id="3.50.50.60">
    <property type="entry name" value="FAD/NAD(P)-binding domain"/>
    <property type="match status" value="2"/>
</dbReference>
<dbReference type="Gene3D" id="1.10.150.570">
    <property type="entry name" value="GidA associated domain, C-terminal subdomain"/>
    <property type="match status" value="1"/>
</dbReference>
<dbReference type="Gene3D" id="1.10.10.1800">
    <property type="entry name" value="tRNA uridine 5-carboxymethylaminomethyl modification enzyme MnmG/GidA"/>
    <property type="match status" value="1"/>
</dbReference>
<dbReference type="HAMAP" id="MF_00129">
    <property type="entry name" value="MnmG_GidA"/>
    <property type="match status" value="1"/>
</dbReference>
<dbReference type="InterPro" id="IPR036188">
    <property type="entry name" value="FAD/NAD-bd_sf"/>
</dbReference>
<dbReference type="InterPro" id="IPR049312">
    <property type="entry name" value="GIDA_C_N"/>
</dbReference>
<dbReference type="InterPro" id="IPR004416">
    <property type="entry name" value="MnmG"/>
</dbReference>
<dbReference type="InterPro" id="IPR002218">
    <property type="entry name" value="MnmG-rel"/>
</dbReference>
<dbReference type="InterPro" id="IPR020595">
    <property type="entry name" value="MnmG-rel_CS"/>
</dbReference>
<dbReference type="InterPro" id="IPR026904">
    <property type="entry name" value="MnmG_C"/>
</dbReference>
<dbReference type="InterPro" id="IPR047001">
    <property type="entry name" value="MnmG_C_subdom"/>
</dbReference>
<dbReference type="InterPro" id="IPR044920">
    <property type="entry name" value="MnmG_C_subdom_sf"/>
</dbReference>
<dbReference type="InterPro" id="IPR040131">
    <property type="entry name" value="MnmG_N"/>
</dbReference>
<dbReference type="NCBIfam" id="TIGR00136">
    <property type="entry name" value="mnmG_gidA"/>
    <property type="match status" value="1"/>
</dbReference>
<dbReference type="PANTHER" id="PTHR11806">
    <property type="entry name" value="GLUCOSE INHIBITED DIVISION PROTEIN A"/>
    <property type="match status" value="1"/>
</dbReference>
<dbReference type="PANTHER" id="PTHR11806:SF0">
    <property type="entry name" value="PROTEIN MTO1 HOMOLOG, MITOCHONDRIAL"/>
    <property type="match status" value="1"/>
</dbReference>
<dbReference type="Pfam" id="PF01134">
    <property type="entry name" value="GIDA"/>
    <property type="match status" value="1"/>
</dbReference>
<dbReference type="Pfam" id="PF21680">
    <property type="entry name" value="GIDA_C_1st"/>
    <property type="match status" value="1"/>
</dbReference>
<dbReference type="Pfam" id="PF13932">
    <property type="entry name" value="SAM_GIDA_C"/>
    <property type="match status" value="1"/>
</dbReference>
<dbReference type="PRINTS" id="PR00411">
    <property type="entry name" value="PNDRDTASEI"/>
</dbReference>
<dbReference type="SMART" id="SM01228">
    <property type="entry name" value="GIDA_assoc_3"/>
    <property type="match status" value="1"/>
</dbReference>
<dbReference type="SUPFAM" id="SSF51905">
    <property type="entry name" value="FAD/NAD(P)-binding domain"/>
    <property type="match status" value="1"/>
</dbReference>
<dbReference type="PROSITE" id="PS01280">
    <property type="entry name" value="GIDA_1"/>
    <property type="match status" value="1"/>
</dbReference>
<dbReference type="PROSITE" id="PS01281">
    <property type="entry name" value="GIDA_2"/>
    <property type="match status" value="1"/>
</dbReference>
<feature type="chain" id="PRO_1000076326" description="tRNA uridine 5-carboxymethylaminomethyl modification enzyme MnmG">
    <location>
        <begin position="1"/>
        <end position="630"/>
    </location>
</feature>
<feature type="binding site" evidence="1">
    <location>
        <begin position="13"/>
        <end position="18"/>
    </location>
    <ligand>
        <name>FAD</name>
        <dbReference type="ChEBI" id="CHEBI:57692"/>
    </ligand>
</feature>
<feature type="binding site" evidence="1">
    <location>
        <begin position="273"/>
        <end position="287"/>
    </location>
    <ligand>
        <name>NAD(+)</name>
        <dbReference type="ChEBI" id="CHEBI:57540"/>
    </ligand>
</feature>
<keyword id="KW-0963">Cytoplasm</keyword>
<keyword id="KW-0274">FAD</keyword>
<keyword id="KW-0285">Flavoprotein</keyword>
<keyword id="KW-0520">NAD</keyword>
<keyword id="KW-0819">tRNA processing</keyword>
<accession>B0KRB9</accession>
<reference key="1">
    <citation type="submission" date="2008-01" db="EMBL/GenBank/DDBJ databases">
        <title>Complete sequence of Pseudomonas putida GB-1.</title>
        <authorList>
            <consortium name="US DOE Joint Genome Institute"/>
            <person name="Copeland A."/>
            <person name="Lucas S."/>
            <person name="Lapidus A."/>
            <person name="Barry K."/>
            <person name="Glavina del Rio T."/>
            <person name="Dalin E."/>
            <person name="Tice H."/>
            <person name="Pitluck S."/>
            <person name="Bruce D."/>
            <person name="Goodwin L."/>
            <person name="Chertkov O."/>
            <person name="Brettin T."/>
            <person name="Detter J.C."/>
            <person name="Han C."/>
            <person name="Kuske C.R."/>
            <person name="Schmutz J."/>
            <person name="Larimer F."/>
            <person name="Land M."/>
            <person name="Hauser L."/>
            <person name="Kyrpides N."/>
            <person name="Kim E."/>
            <person name="McCarthy J.K."/>
            <person name="Richardson P."/>
        </authorList>
    </citation>
    <scope>NUCLEOTIDE SEQUENCE [LARGE SCALE GENOMIC DNA]</scope>
    <source>
        <strain>GB-1</strain>
    </source>
</reference>
<proteinExistence type="inferred from homology"/>
<gene>
    <name evidence="1" type="primary">mnmG</name>
    <name evidence="1" type="synonym">gidA</name>
    <name type="ordered locus">PputGB1_5442</name>
</gene>